<reference key="1">
    <citation type="submission" date="2007-08" db="EMBL/GenBank/DDBJ databases">
        <title>Complete sequence of Thermotoga lettingae TMO.</title>
        <authorList>
            <consortium name="US DOE Joint Genome Institute"/>
            <person name="Copeland A."/>
            <person name="Lucas S."/>
            <person name="Lapidus A."/>
            <person name="Barry K."/>
            <person name="Glavina del Rio T."/>
            <person name="Dalin E."/>
            <person name="Tice H."/>
            <person name="Pitluck S."/>
            <person name="Foster B."/>
            <person name="Bruce D."/>
            <person name="Schmutz J."/>
            <person name="Larimer F."/>
            <person name="Land M."/>
            <person name="Hauser L."/>
            <person name="Kyrpides N."/>
            <person name="Mikhailova N."/>
            <person name="Nelson K."/>
            <person name="Gogarten J.P."/>
            <person name="Noll K."/>
            <person name="Richardson P."/>
        </authorList>
    </citation>
    <scope>NUCLEOTIDE SEQUENCE [LARGE SCALE GENOMIC DNA]</scope>
    <source>
        <strain>ATCC BAA-301 / DSM 14385 / NBRC 107922 / TMO</strain>
    </source>
</reference>
<protein>
    <recommendedName>
        <fullName evidence="1">DNA mismatch repair protein MutS</fullName>
    </recommendedName>
</protein>
<organism>
    <name type="scientific">Pseudothermotoga lettingae (strain ATCC BAA-301 / DSM 14385 / NBRC 107922 / TMO)</name>
    <name type="common">Thermotoga lettingae</name>
    <dbReference type="NCBI Taxonomy" id="416591"/>
    <lineage>
        <taxon>Bacteria</taxon>
        <taxon>Thermotogati</taxon>
        <taxon>Thermotogota</taxon>
        <taxon>Thermotogae</taxon>
        <taxon>Thermotogales</taxon>
        <taxon>Thermotogaceae</taxon>
        <taxon>Pseudothermotoga</taxon>
    </lineage>
</organism>
<gene>
    <name evidence="1" type="primary">mutS</name>
    <name type="ordered locus">Tlet_1431</name>
</gene>
<proteinExistence type="inferred from homology"/>
<dbReference type="EMBL" id="CP000812">
    <property type="protein sequence ID" value="ABV33987.1"/>
    <property type="molecule type" value="Genomic_DNA"/>
</dbReference>
<dbReference type="RefSeq" id="WP_012003463.1">
    <property type="nucleotide sequence ID" value="NZ_BSDV01000001.1"/>
</dbReference>
<dbReference type="SMR" id="A8F753"/>
<dbReference type="STRING" id="416591.Tlet_1431"/>
<dbReference type="KEGG" id="tle:Tlet_1431"/>
<dbReference type="eggNOG" id="COG0249">
    <property type="taxonomic scope" value="Bacteria"/>
</dbReference>
<dbReference type="HOGENOM" id="CLU_002472_1_3_0"/>
<dbReference type="OrthoDB" id="9802448at2"/>
<dbReference type="Proteomes" id="UP000002016">
    <property type="component" value="Chromosome"/>
</dbReference>
<dbReference type="GO" id="GO:0005829">
    <property type="term" value="C:cytosol"/>
    <property type="evidence" value="ECO:0007669"/>
    <property type="project" value="TreeGrafter"/>
</dbReference>
<dbReference type="GO" id="GO:0005524">
    <property type="term" value="F:ATP binding"/>
    <property type="evidence" value="ECO:0007669"/>
    <property type="project" value="UniProtKB-UniRule"/>
</dbReference>
<dbReference type="GO" id="GO:0140664">
    <property type="term" value="F:ATP-dependent DNA damage sensor activity"/>
    <property type="evidence" value="ECO:0007669"/>
    <property type="project" value="InterPro"/>
</dbReference>
<dbReference type="GO" id="GO:0003684">
    <property type="term" value="F:damaged DNA binding"/>
    <property type="evidence" value="ECO:0007669"/>
    <property type="project" value="UniProtKB-UniRule"/>
</dbReference>
<dbReference type="GO" id="GO:0030983">
    <property type="term" value="F:mismatched DNA binding"/>
    <property type="evidence" value="ECO:0007669"/>
    <property type="project" value="InterPro"/>
</dbReference>
<dbReference type="GO" id="GO:0006298">
    <property type="term" value="P:mismatch repair"/>
    <property type="evidence" value="ECO:0007669"/>
    <property type="project" value="UniProtKB-UniRule"/>
</dbReference>
<dbReference type="CDD" id="cd03284">
    <property type="entry name" value="ABC_MutS1"/>
    <property type="match status" value="1"/>
</dbReference>
<dbReference type="FunFam" id="3.40.1170.10:FF:000001">
    <property type="entry name" value="DNA mismatch repair protein MutS"/>
    <property type="match status" value="1"/>
</dbReference>
<dbReference type="FunFam" id="3.40.50.300:FF:000870">
    <property type="entry name" value="MutS protein homolog 4"/>
    <property type="match status" value="1"/>
</dbReference>
<dbReference type="Gene3D" id="1.10.1420.10">
    <property type="match status" value="2"/>
</dbReference>
<dbReference type="Gene3D" id="3.40.1170.10">
    <property type="entry name" value="DNA repair protein MutS, domain I"/>
    <property type="match status" value="1"/>
</dbReference>
<dbReference type="Gene3D" id="3.30.420.110">
    <property type="entry name" value="MutS, connector domain"/>
    <property type="match status" value="1"/>
</dbReference>
<dbReference type="Gene3D" id="3.40.50.300">
    <property type="entry name" value="P-loop containing nucleotide triphosphate hydrolases"/>
    <property type="match status" value="1"/>
</dbReference>
<dbReference type="HAMAP" id="MF_00096">
    <property type="entry name" value="MutS"/>
    <property type="match status" value="1"/>
</dbReference>
<dbReference type="InterPro" id="IPR005748">
    <property type="entry name" value="DNA_mismatch_repair_MutS"/>
</dbReference>
<dbReference type="InterPro" id="IPR007695">
    <property type="entry name" value="DNA_mismatch_repair_MutS-lik_N"/>
</dbReference>
<dbReference type="InterPro" id="IPR017261">
    <property type="entry name" value="DNA_mismatch_repair_MutS/MSH"/>
</dbReference>
<dbReference type="InterPro" id="IPR000432">
    <property type="entry name" value="DNA_mismatch_repair_MutS_C"/>
</dbReference>
<dbReference type="InterPro" id="IPR007861">
    <property type="entry name" value="DNA_mismatch_repair_MutS_clamp"/>
</dbReference>
<dbReference type="InterPro" id="IPR007696">
    <property type="entry name" value="DNA_mismatch_repair_MutS_core"/>
</dbReference>
<dbReference type="InterPro" id="IPR016151">
    <property type="entry name" value="DNA_mismatch_repair_MutS_N"/>
</dbReference>
<dbReference type="InterPro" id="IPR036187">
    <property type="entry name" value="DNA_mismatch_repair_MutS_sf"/>
</dbReference>
<dbReference type="InterPro" id="IPR007860">
    <property type="entry name" value="DNA_mmatch_repair_MutS_con_dom"/>
</dbReference>
<dbReference type="InterPro" id="IPR045076">
    <property type="entry name" value="MutS"/>
</dbReference>
<dbReference type="InterPro" id="IPR036678">
    <property type="entry name" value="MutS_con_dom_sf"/>
</dbReference>
<dbReference type="InterPro" id="IPR027417">
    <property type="entry name" value="P-loop_NTPase"/>
</dbReference>
<dbReference type="NCBIfam" id="TIGR01070">
    <property type="entry name" value="mutS1"/>
    <property type="match status" value="1"/>
</dbReference>
<dbReference type="NCBIfam" id="NF003810">
    <property type="entry name" value="PRK05399.1"/>
    <property type="match status" value="1"/>
</dbReference>
<dbReference type="PANTHER" id="PTHR11361:SF34">
    <property type="entry name" value="DNA MISMATCH REPAIR PROTEIN MSH1, MITOCHONDRIAL"/>
    <property type="match status" value="1"/>
</dbReference>
<dbReference type="PANTHER" id="PTHR11361">
    <property type="entry name" value="DNA MISMATCH REPAIR PROTEIN MUTS FAMILY MEMBER"/>
    <property type="match status" value="1"/>
</dbReference>
<dbReference type="Pfam" id="PF01624">
    <property type="entry name" value="MutS_I"/>
    <property type="match status" value="1"/>
</dbReference>
<dbReference type="Pfam" id="PF05188">
    <property type="entry name" value="MutS_II"/>
    <property type="match status" value="1"/>
</dbReference>
<dbReference type="Pfam" id="PF05192">
    <property type="entry name" value="MutS_III"/>
    <property type="match status" value="1"/>
</dbReference>
<dbReference type="Pfam" id="PF05190">
    <property type="entry name" value="MutS_IV"/>
    <property type="match status" value="1"/>
</dbReference>
<dbReference type="Pfam" id="PF00488">
    <property type="entry name" value="MutS_V"/>
    <property type="match status" value="1"/>
</dbReference>
<dbReference type="PIRSF" id="PIRSF037677">
    <property type="entry name" value="DNA_mis_repair_Msh6"/>
    <property type="match status" value="1"/>
</dbReference>
<dbReference type="SMART" id="SM00534">
    <property type="entry name" value="MUTSac"/>
    <property type="match status" value="1"/>
</dbReference>
<dbReference type="SMART" id="SM00533">
    <property type="entry name" value="MUTSd"/>
    <property type="match status" value="1"/>
</dbReference>
<dbReference type="SUPFAM" id="SSF55271">
    <property type="entry name" value="DNA repair protein MutS, domain I"/>
    <property type="match status" value="1"/>
</dbReference>
<dbReference type="SUPFAM" id="SSF53150">
    <property type="entry name" value="DNA repair protein MutS, domain II"/>
    <property type="match status" value="1"/>
</dbReference>
<dbReference type="SUPFAM" id="SSF48334">
    <property type="entry name" value="DNA repair protein MutS, domain III"/>
    <property type="match status" value="1"/>
</dbReference>
<dbReference type="SUPFAM" id="SSF52540">
    <property type="entry name" value="P-loop containing nucleoside triphosphate hydrolases"/>
    <property type="match status" value="1"/>
</dbReference>
<dbReference type="PROSITE" id="PS00486">
    <property type="entry name" value="DNA_MISMATCH_REPAIR_2"/>
    <property type="match status" value="1"/>
</dbReference>
<comment type="function">
    <text evidence="1">This protein is involved in the repair of mismatches in DNA. It is possible that it carries out the mismatch recognition step. This protein has a weak ATPase activity.</text>
</comment>
<comment type="similarity">
    <text evidence="1">Belongs to the DNA mismatch repair MutS family.</text>
</comment>
<accession>A8F753</accession>
<keyword id="KW-0067">ATP-binding</keyword>
<keyword id="KW-0227">DNA damage</keyword>
<keyword id="KW-0234">DNA repair</keyword>
<keyword id="KW-0238">DNA-binding</keyword>
<keyword id="KW-0547">Nucleotide-binding</keyword>
<keyword id="KW-1185">Reference proteome</keyword>
<evidence type="ECO:0000255" key="1">
    <source>
        <dbReference type="HAMAP-Rule" id="MF_00096"/>
    </source>
</evidence>
<name>MUTS_PSELT</name>
<sequence length="811" mass="92164">MKLTPMMQQYMDIKSKYKDAILLFRLGDFYEAFFEDAEIVSKTLDLVLTHRQDAPMAGVPYHALNTYLKKLVQFGYKVAICDQVEDPSTAKGLVKREVTRIVTPGTVLEDDLLDQNSNNYLVAICRKSEYSVAGVDISTGESFVVSFKDFQSMIDFLGSVKVSQVLCEPDLRQDLEKNLADIMIESLADWHLDDALLEKDIAEVFKVSDIDHLELGSNLKVFGALVRYLRYTLMSPCTLVKPPRIIRDQMYVFLDPATIEHLSLVGGEKGKNLFDVLNHTKTSMGSRLLKNWILQPLRDLYEINKRLDKVQAFVEDSILLNEIREYLQAVRDIQRIANRINYGKASVKDLVALRSTLQVCPYIKEVLLTNEAFPEAAMVDCLHDICEILNDAIKEEPSSVIGEGKVIKEGYDEQLDQLRELVYHSQEFLNNFEQRERDRTGIPNLRVGYNSVFGYYIEITKSHLSKIPPNYVRKQTLVNAERFITDELKEFEQKMLTAKENLERREKEIYDEICASLSSKVGLIIELAEFLAQIDVLSTLAYVAIRYGYTKPSFSNDGKLLLRNSRHPVVERLVDTFVPNDLEMDRTKNFIILTGPNMSGKSTFIRQVALVSIMAQMGSFVPADEAILPVFDRIFAKMGIRDDIASGKSTFLIEMNEVAKIVYQATENSLILLDEVGRGTSTFDGISIAWAVSEYLQNQISCKCIFATHFTELTELAKMYDGIVNKTVQVIEEKNQVIFLHRVVDGIADRSYGIEVAGIAGLPGEIIQRAREVLDVIANKSELEDKLRVISSEKLKKLKKKKVHPNQAQLW</sequence>
<feature type="chain" id="PRO_1000057638" description="DNA mismatch repair protein MutS">
    <location>
        <begin position="1"/>
        <end position="811"/>
    </location>
</feature>
<feature type="binding site" evidence="1">
    <location>
        <begin position="595"/>
        <end position="602"/>
    </location>
    <ligand>
        <name>ATP</name>
        <dbReference type="ChEBI" id="CHEBI:30616"/>
    </ligand>
</feature>